<evidence type="ECO:0000255" key="1">
    <source>
        <dbReference type="HAMAP-Rule" id="MF_00421"/>
    </source>
</evidence>
<keyword id="KW-0067">ATP-binding</keyword>
<keyword id="KW-0963">Cytoplasm</keyword>
<keyword id="KW-0315">Glutamine amidotransferase</keyword>
<keyword id="KW-0378">Hydrolase</keyword>
<keyword id="KW-0436">Ligase</keyword>
<keyword id="KW-0547">Nucleotide-binding</keyword>
<keyword id="KW-0658">Purine biosynthesis</keyword>
<keyword id="KW-1185">Reference proteome</keyword>
<organism>
    <name type="scientific">Streptomyces avermitilis (strain ATCC 31267 / DSM 46492 / JCM 5070 / NBRC 14893 / NCIMB 12804 / NRRL 8165 / MA-4680)</name>
    <dbReference type="NCBI Taxonomy" id="227882"/>
    <lineage>
        <taxon>Bacteria</taxon>
        <taxon>Bacillati</taxon>
        <taxon>Actinomycetota</taxon>
        <taxon>Actinomycetes</taxon>
        <taxon>Kitasatosporales</taxon>
        <taxon>Streptomycetaceae</taxon>
        <taxon>Streptomyces</taxon>
    </lineage>
</organism>
<gene>
    <name evidence="1" type="primary">purQ</name>
    <name type="ordered locus">SAV_4139</name>
</gene>
<proteinExistence type="inferred from homology"/>
<sequence length="234" mass="25255">MTARIGVVTFPGSLDDRDTQRAIKLAGAEPVALWHKDKDLKQVDAVVLPGGFSYGDYLRAGAISRFSPVMETVIEQAKSGMPVLGICNGFQILTEAHLLPGAMLGNNHLHFICRDQKLRVENADTAWTSDYEAGQEIHIPLKNMDGRYVADERTLDMLEAEGRVAFRYVVGGAAADGYGNPNGSLRDIAGITNEAGNVVGLMPHPEHAVEPLIGTGRTDGLPFFTSILKKLVNA</sequence>
<dbReference type="EC" id="6.3.5.3" evidence="1"/>
<dbReference type="EC" id="3.5.1.2" evidence="1"/>
<dbReference type="EMBL" id="BA000030">
    <property type="protein sequence ID" value="BAC71851.1"/>
    <property type="molecule type" value="Genomic_DNA"/>
</dbReference>
<dbReference type="RefSeq" id="WP_010985567.1">
    <property type="nucleotide sequence ID" value="NZ_JZJK01000079.1"/>
</dbReference>
<dbReference type="SMR" id="Q82FW3"/>
<dbReference type="DNASU" id="1210891"/>
<dbReference type="GeneID" id="41541214"/>
<dbReference type="KEGG" id="sma:SAVERM_4139"/>
<dbReference type="eggNOG" id="COG0047">
    <property type="taxonomic scope" value="Bacteria"/>
</dbReference>
<dbReference type="HOGENOM" id="CLU_001031_3_1_11"/>
<dbReference type="OrthoDB" id="9804441at2"/>
<dbReference type="UniPathway" id="UPA00074">
    <property type="reaction ID" value="UER00128"/>
</dbReference>
<dbReference type="Proteomes" id="UP000000428">
    <property type="component" value="Chromosome"/>
</dbReference>
<dbReference type="GO" id="GO:0005737">
    <property type="term" value="C:cytoplasm"/>
    <property type="evidence" value="ECO:0007669"/>
    <property type="project" value="UniProtKB-SubCell"/>
</dbReference>
<dbReference type="GO" id="GO:0005524">
    <property type="term" value="F:ATP binding"/>
    <property type="evidence" value="ECO:0007669"/>
    <property type="project" value="UniProtKB-KW"/>
</dbReference>
<dbReference type="GO" id="GO:0004359">
    <property type="term" value="F:glutaminase activity"/>
    <property type="evidence" value="ECO:0007669"/>
    <property type="project" value="UniProtKB-EC"/>
</dbReference>
<dbReference type="GO" id="GO:0004642">
    <property type="term" value="F:phosphoribosylformylglycinamidine synthase activity"/>
    <property type="evidence" value="ECO:0007669"/>
    <property type="project" value="UniProtKB-UniRule"/>
</dbReference>
<dbReference type="GO" id="GO:0006189">
    <property type="term" value="P:'de novo' IMP biosynthetic process"/>
    <property type="evidence" value="ECO:0007669"/>
    <property type="project" value="UniProtKB-UniRule"/>
</dbReference>
<dbReference type="CDD" id="cd01740">
    <property type="entry name" value="GATase1_FGAR_AT"/>
    <property type="match status" value="1"/>
</dbReference>
<dbReference type="FunFam" id="3.40.50.880:FF:000019">
    <property type="entry name" value="Phosphoribosylformylglycinamidine synthase subunit PurQ"/>
    <property type="match status" value="1"/>
</dbReference>
<dbReference type="Gene3D" id="3.40.50.880">
    <property type="match status" value="1"/>
</dbReference>
<dbReference type="HAMAP" id="MF_00421">
    <property type="entry name" value="PurQ"/>
    <property type="match status" value="1"/>
</dbReference>
<dbReference type="InterPro" id="IPR029062">
    <property type="entry name" value="Class_I_gatase-like"/>
</dbReference>
<dbReference type="InterPro" id="IPR010075">
    <property type="entry name" value="PRibForGlyAmidine_synth_PurQ"/>
</dbReference>
<dbReference type="NCBIfam" id="TIGR01737">
    <property type="entry name" value="FGAM_synth_I"/>
    <property type="match status" value="1"/>
</dbReference>
<dbReference type="NCBIfam" id="NF002957">
    <property type="entry name" value="PRK03619.1"/>
    <property type="match status" value="1"/>
</dbReference>
<dbReference type="PANTHER" id="PTHR47552">
    <property type="entry name" value="PHOSPHORIBOSYLFORMYLGLYCINAMIDINE SYNTHASE SUBUNIT PURQ"/>
    <property type="match status" value="1"/>
</dbReference>
<dbReference type="PANTHER" id="PTHR47552:SF1">
    <property type="entry name" value="PHOSPHORIBOSYLFORMYLGLYCINAMIDINE SYNTHASE SUBUNIT PURQ"/>
    <property type="match status" value="1"/>
</dbReference>
<dbReference type="Pfam" id="PF13507">
    <property type="entry name" value="GATase_5"/>
    <property type="match status" value="1"/>
</dbReference>
<dbReference type="PIRSF" id="PIRSF001586">
    <property type="entry name" value="FGAM_synth_I"/>
    <property type="match status" value="1"/>
</dbReference>
<dbReference type="SMART" id="SM01211">
    <property type="entry name" value="GATase_5"/>
    <property type="match status" value="1"/>
</dbReference>
<dbReference type="SUPFAM" id="SSF52317">
    <property type="entry name" value="Class I glutamine amidotransferase-like"/>
    <property type="match status" value="1"/>
</dbReference>
<dbReference type="PROSITE" id="PS51273">
    <property type="entry name" value="GATASE_TYPE_1"/>
    <property type="match status" value="1"/>
</dbReference>
<feature type="chain" id="PRO_0000100591" description="Phosphoribosylformylglycinamidine synthase subunit PurQ">
    <location>
        <begin position="1"/>
        <end position="234"/>
    </location>
</feature>
<feature type="domain" description="Glutamine amidotransferase type-1" evidence="1">
    <location>
        <begin position="4"/>
        <end position="234"/>
    </location>
</feature>
<feature type="active site" description="Nucleophile" evidence="1">
    <location>
        <position position="87"/>
    </location>
</feature>
<feature type="active site" evidence="1">
    <location>
        <position position="204"/>
    </location>
</feature>
<feature type="active site" evidence="1">
    <location>
        <position position="206"/>
    </location>
</feature>
<accession>Q82FW3</accession>
<protein>
    <recommendedName>
        <fullName evidence="1">Phosphoribosylformylglycinamidine synthase subunit PurQ</fullName>
        <shortName evidence="1">FGAM synthase</shortName>
        <ecNumber evidence="1">6.3.5.3</ecNumber>
    </recommendedName>
    <alternativeName>
        <fullName evidence="1">Formylglycinamide ribonucleotide amidotransferase subunit I</fullName>
        <shortName evidence="1">FGAR amidotransferase I</shortName>
        <shortName evidence="1">FGAR-AT I</shortName>
    </alternativeName>
    <alternativeName>
        <fullName evidence="1">Glutaminase PurQ</fullName>
        <ecNumber evidence="1">3.5.1.2</ecNumber>
    </alternativeName>
    <alternativeName>
        <fullName evidence="1">Phosphoribosylformylglycinamidine synthase subunit I</fullName>
    </alternativeName>
</protein>
<name>PURQ_STRAW</name>
<comment type="function">
    <text evidence="1">Part of the phosphoribosylformylglycinamidine synthase complex involved in the purines biosynthetic pathway. Catalyzes the ATP-dependent conversion of formylglycinamide ribonucleotide (FGAR) and glutamine to yield formylglycinamidine ribonucleotide (FGAM) and glutamate. The FGAM synthase complex is composed of three subunits. PurQ produces an ammonia molecule by converting glutamine to glutamate. PurL transfers the ammonia molecule to FGAR to form FGAM in an ATP-dependent manner. PurS interacts with PurQ and PurL and is thought to assist in the transfer of the ammonia molecule from PurQ to PurL.</text>
</comment>
<comment type="catalytic activity">
    <reaction evidence="1">
        <text>N(2)-formyl-N(1)-(5-phospho-beta-D-ribosyl)glycinamide + L-glutamine + ATP + H2O = 2-formamido-N(1)-(5-O-phospho-beta-D-ribosyl)acetamidine + L-glutamate + ADP + phosphate + H(+)</text>
        <dbReference type="Rhea" id="RHEA:17129"/>
        <dbReference type="ChEBI" id="CHEBI:15377"/>
        <dbReference type="ChEBI" id="CHEBI:15378"/>
        <dbReference type="ChEBI" id="CHEBI:29985"/>
        <dbReference type="ChEBI" id="CHEBI:30616"/>
        <dbReference type="ChEBI" id="CHEBI:43474"/>
        <dbReference type="ChEBI" id="CHEBI:58359"/>
        <dbReference type="ChEBI" id="CHEBI:147286"/>
        <dbReference type="ChEBI" id="CHEBI:147287"/>
        <dbReference type="ChEBI" id="CHEBI:456216"/>
        <dbReference type="EC" id="6.3.5.3"/>
    </reaction>
</comment>
<comment type="catalytic activity">
    <reaction evidence="1">
        <text>L-glutamine + H2O = L-glutamate + NH4(+)</text>
        <dbReference type="Rhea" id="RHEA:15889"/>
        <dbReference type="ChEBI" id="CHEBI:15377"/>
        <dbReference type="ChEBI" id="CHEBI:28938"/>
        <dbReference type="ChEBI" id="CHEBI:29985"/>
        <dbReference type="ChEBI" id="CHEBI:58359"/>
        <dbReference type="EC" id="3.5.1.2"/>
    </reaction>
</comment>
<comment type="pathway">
    <text evidence="1">Purine metabolism; IMP biosynthesis via de novo pathway; 5-amino-1-(5-phospho-D-ribosyl)imidazole from N(2)-formyl-N(1)-(5-phospho-D-ribosyl)glycinamide: step 1/2.</text>
</comment>
<comment type="subunit">
    <text evidence="1">Part of the FGAM synthase complex composed of 1 PurL, 1 PurQ and 2 PurS subunits.</text>
</comment>
<comment type="subcellular location">
    <subcellularLocation>
        <location evidence="1">Cytoplasm</location>
    </subcellularLocation>
</comment>
<reference key="1">
    <citation type="journal article" date="2001" name="Proc. Natl. Acad. Sci. U.S.A.">
        <title>Genome sequence of an industrial microorganism Streptomyces avermitilis: deducing the ability of producing secondary metabolites.</title>
        <authorList>
            <person name="Omura S."/>
            <person name="Ikeda H."/>
            <person name="Ishikawa J."/>
            <person name="Hanamoto A."/>
            <person name="Takahashi C."/>
            <person name="Shinose M."/>
            <person name="Takahashi Y."/>
            <person name="Horikawa H."/>
            <person name="Nakazawa H."/>
            <person name="Osonoe T."/>
            <person name="Kikuchi H."/>
            <person name="Shiba T."/>
            <person name="Sakaki Y."/>
            <person name="Hattori M."/>
        </authorList>
    </citation>
    <scope>NUCLEOTIDE SEQUENCE [LARGE SCALE GENOMIC DNA]</scope>
    <source>
        <strain>ATCC 31267 / DSM 46492 / JCM 5070 / NBRC 14893 / NCIMB 12804 / NRRL 8165 / MA-4680</strain>
    </source>
</reference>
<reference key="2">
    <citation type="journal article" date="2003" name="Nat. Biotechnol.">
        <title>Complete genome sequence and comparative analysis of the industrial microorganism Streptomyces avermitilis.</title>
        <authorList>
            <person name="Ikeda H."/>
            <person name="Ishikawa J."/>
            <person name="Hanamoto A."/>
            <person name="Shinose M."/>
            <person name="Kikuchi H."/>
            <person name="Shiba T."/>
            <person name="Sakaki Y."/>
            <person name="Hattori M."/>
            <person name="Omura S."/>
        </authorList>
    </citation>
    <scope>NUCLEOTIDE SEQUENCE [LARGE SCALE GENOMIC DNA]</scope>
    <source>
        <strain>ATCC 31267 / DSM 46492 / JCM 5070 / NBRC 14893 / NCIMB 12804 / NRRL 8165 / MA-4680</strain>
    </source>
</reference>